<proteinExistence type="inferred from homology"/>
<comment type="function">
    <text evidence="1">Core subunit of the mitochondrial membrane respiratory chain NADH dehydrogenase (Complex I) which catalyzes electron transfer from NADH through the respiratory chain, using ubiquinone as an electron acceptor. Essential for the catalytic activity and assembly of complex I.</text>
</comment>
<comment type="catalytic activity">
    <reaction evidence="1">
        <text>a ubiquinone + NADH + 5 H(+)(in) = a ubiquinol + NAD(+) + 4 H(+)(out)</text>
        <dbReference type="Rhea" id="RHEA:29091"/>
        <dbReference type="Rhea" id="RHEA-COMP:9565"/>
        <dbReference type="Rhea" id="RHEA-COMP:9566"/>
        <dbReference type="ChEBI" id="CHEBI:15378"/>
        <dbReference type="ChEBI" id="CHEBI:16389"/>
        <dbReference type="ChEBI" id="CHEBI:17976"/>
        <dbReference type="ChEBI" id="CHEBI:57540"/>
        <dbReference type="ChEBI" id="CHEBI:57945"/>
        <dbReference type="EC" id="7.1.1.2"/>
    </reaction>
</comment>
<comment type="subunit">
    <text evidence="2">Core subunit of respiratory chain NADH dehydrogenase (Complex I) which is composed of 45 different subunits.</text>
</comment>
<comment type="subcellular location">
    <subcellularLocation>
        <location evidence="2">Mitochondrion inner membrane</location>
        <topology evidence="3">Multi-pass membrane protein</topology>
    </subcellularLocation>
</comment>
<comment type="similarity">
    <text evidence="4">Belongs to the complex I subunit 6 family.</text>
</comment>
<keyword id="KW-0249">Electron transport</keyword>
<keyword id="KW-0472">Membrane</keyword>
<keyword id="KW-0496">Mitochondrion</keyword>
<keyword id="KW-0999">Mitochondrion inner membrane</keyword>
<keyword id="KW-0520">NAD</keyword>
<keyword id="KW-0679">Respiratory chain</keyword>
<keyword id="KW-1278">Translocase</keyword>
<keyword id="KW-0812">Transmembrane</keyword>
<keyword id="KW-1133">Transmembrane helix</keyword>
<keyword id="KW-0813">Transport</keyword>
<keyword id="KW-0830">Ubiquinone</keyword>
<accession>Q9T9X3</accession>
<organism>
    <name type="scientific">Pongo pygmaeus</name>
    <name type="common">Bornean orangutan</name>
    <dbReference type="NCBI Taxonomy" id="9600"/>
    <lineage>
        <taxon>Eukaryota</taxon>
        <taxon>Metazoa</taxon>
        <taxon>Chordata</taxon>
        <taxon>Craniata</taxon>
        <taxon>Vertebrata</taxon>
        <taxon>Euteleostomi</taxon>
        <taxon>Mammalia</taxon>
        <taxon>Eutheria</taxon>
        <taxon>Euarchontoglires</taxon>
        <taxon>Primates</taxon>
        <taxon>Haplorrhini</taxon>
        <taxon>Catarrhini</taxon>
        <taxon>Hominidae</taxon>
        <taxon>Pongo</taxon>
    </lineage>
</organism>
<feature type="chain" id="PRO_0000118320" description="NADH-ubiquinone oxidoreductase chain 6">
    <location>
        <begin position="1"/>
        <end position="174"/>
    </location>
</feature>
<feature type="transmembrane region" description="Helical" evidence="3">
    <location>
        <begin position="1"/>
        <end position="21"/>
    </location>
</feature>
<feature type="transmembrane region" description="Helical" evidence="3">
    <location>
        <begin position="24"/>
        <end position="44"/>
    </location>
</feature>
<feature type="transmembrane region" description="Helical" evidence="3">
    <location>
        <begin position="47"/>
        <end position="67"/>
    </location>
</feature>
<feature type="transmembrane region" description="Helical" evidence="3">
    <location>
        <begin position="86"/>
        <end position="106"/>
    </location>
</feature>
<feature type="transmembrane region" description="Helical" evidence="3">
    <location>
        <begin position="111"/>
        <end position="131"/>
    </location>
</feature>
<feature type="transmembrane region" description="Helical" evidence="3">
    <location>
        <begin position="151"/>
        <end position="171"/>
    </location>
</feature>
<evidence type="ECO:0000250" key="1">
    <source>
        <dbReference type="UniProtKB" id="P03923"/>
    </source>
</evidence>
<evidence type="ECO:0000250" key="2">
    <source>
        <dbReference type="UniProtKB" id="P03924"/>
    </source>
</evidence>
<evidence type="ECO:0000255" key="3"/>
<evidence type="ECO:0000305" key="4"/>
<dbReference type="EC" id="7.1.1.2" evidence="1"/>
<dbReference type="EMBL" id="D38115">
    <property type="protein sequence ID" value="BAA85292.1"/>
    <property type="molecule type" value="Genomic_DNA"/>
</dbReference>
<dbReference type="RefSeq" id="NP_008236.1">
    <property type="nucleotide sequence ID" value="NC_001646.1"/>
</dbReference>
<dbReference type="SMR" id="Q9T9X3"/>
<dbReference type="GeneID" id="807911"/>
<dbReference type="KEGG" id="ppyg:807911"/>
<dbReference type="CTD" id="4541"/>
<dbReference type="GO" id="GO:0005743">
    <property type="term" value="C:mitochondrial inner membrane"/>
    <property type="evidence" value="ECO:0000250"/>
    <property type="project" value="UniProtKB"/>
</dbReference>
<dbReference type="GO" id="GO:0008137">
    <property type="term" value="F:NADH dehydrogenase (ubiquinone) activity"/>
    <property type="evidence" value="ECO:0000250"/>
    <property type="project" value="UniProtKB"/>
</dbReference>
<dbReference type="GO" id="GO:0006120">
    <property type="term" value="P:mitochondrial electron transport, NADH to ubiquinone"/>
    <property type="evidence" value="ECO:0000250"/>
    <property type="project" value="UniProtKB"/>
</dbReference>
<dbReference type="GO" id="GO:0032981">
    <property type="term" value="P:mitochondrial respiratory chain complex I assembly"/>
    <property type="evidence" value="ECO:0000250"/>
    <property type="project" value="UniProtKB"/>
</dbReference>
<dbReference type="InterPro" id="IPR050269">
    <property type="entry name" value="ComplexI_Subunit6"/>
</dbReference>
<dbReference type="InterPro" id="IPR001457">
    <property type="entry name" value="NADH_UbQ/plastoQ_OxRdtase_su6"/>
</dbReference>
<dbReference type="PANTHER" id="PTHR11435">
    <property type="entry name" value="NADH UBIQUINONE OXIDOREDUCTASE SUBUNIT ND6"/>
    <property type="match status" value="1"/>
</dbReference>
<dbReference type="PANTHER" id="PTHR11435:SF1">
    <property type="entry name" value="NADH-UBIQUINONE OXIDOREDUCTASE CHAIN 6"/>
    <property type="match status" value="1"/>
</dbReference>
<dbReference type="Pfam" id="PF00499">
    <property type="entry name" value="Oxidored_q3"/>
    <property type="match status" value="1"/>
</dbReference>
<gene>
    <name type="primary">MT-ND6</name>
    <name type="synonym">MTND6</name>
    <name type="synonym">NADH6</name>
    <name type="synonym">ND6</name>
</gene>
<sequence length="174" mass="18400">MTYALFLLSVILVMGFVGFSSKPSPIYGGLVLIISGAVGCAVILNCGGGYMGLVVFLVYLGGMMVVFGYTTAMAIEEYPEAWGSGAEVLVSVLVGLVMEVGLVLWVKECDGVVVAVNFNSVGSWMIYEGEGSGLIREDPIGAGALYDYGRWLVVVTGWTLFVGVYVVIEIARGN</sequence>
<name>NU6M_PONPY</name>
<protein>
    <recommendedName>
        <fullName>NADH-ubiquinone oxidoreductase chain 6</fullName>
        <ecNumber evidence="1">7.1.1.2</ecNumber>
    </recommendedName>
    <alternativeName>
        <fullName>NADH dehydrogenase subunit 6</fullName>
    </alternativeName>
</protein>
<geneLocation type="mitochondrion"/>
<reference key="1">
    <citation type="journal article" date="1995" name="Proc. Natl. Acad. Sci. U.S.A.">
        <title>Recent African origin of modern humans revealed by complete sequences of hominoid mitochondrial DNAs.</title>
        <authorList>
            <person name="Horai S."/>
            <person name="Hayasaka K."/>
            <person name="Kondo R."/>
            <person name="Tsugane K."/>
            <person name="Takahata N."/>
        </authorList>
    </citation>
    <scope>NUCLEOTIDE SEQUENCE [GENOMIC DNA]</scope>
</reference>